<sequence>MPNANAIANVFKLIEENNVKFVLLRFTDIKGKEHGVSIPVSLVDEDMFEDGKMFDGSSVEGWKTINKADMLLMPMAETAIVDPFAQIPTLSIRCSVYEPTTMQSYDRDPRSIAIRAENYMRSTGIADQAFFGPEPEFFLFDDVRFNVSMNKASFSIDDIEAAWNTNKKYEEGNNAYRPLKKGGYCAVAPIDSAHDIRSEMCLILEEMGLVIEAHHHEVATAGQNEIATKFNTLTLKADETQIYKHVVQNVALEHGKTACFMPKPITGDNGSGMHCNMSLSKDGKNIFQGDKYAGLSETALYYIGGIIKHAKALNAFTNPSTNSYKRLVPGYEAPVLLAYSASNRSASIRIPAVTNPKAIRVEARFPDPLANPYLAFAALLMAGLDGVVNKIHPGDAMDKNLYDLPPEELKDIPAVASSLEEALNSLEKDYEFLTQGGVFAKDFIDAFISIKRKEVERLNMAPHPVEFEMYYA</sequence>
<keyword id="KW-0067">ATP-binding</keyword>
<keyword id="KW-0963">Cytoplasm</keyword>
<keyword id="KW-0436">Ligase</keyword>
<keyword id="KW-0460">Magnesium</keyword>
<keyword id="KW-0479">Metal-binding</keyword>
<keyword id="KW-0547">Nucleotide-binding</keyword>
<keyword id="KW-0597">Phosphoprotein</keyword>
<keyword id="KW-1185">Reference proteome</keyword>
<protein>
    <recommendedName>
        <fullName evidence="1">Glutamine synthetase</fullName>
        <shortName evidence="1">GS</shortName>
        <ecNumber evidence="1">6.3.1.2</ecNumber>
    </recommendedName>
    <alternativeName>
        <fullName evidence="8">Glutamate--ammonia ligase</fullName>
    </alternativeName>
    <alternativeName>
        <fullName evidence="1">Glutamine synthetase I beta</fullName>
        <shortName evidence="1">GSI beta</shortName>
    </alternativeName>
</protein>
<organism>
    <name type="scientific">Haemophilus influenzae (strain ATCC 51907 / DSM 11121 / KW20 / Rd)</name>
    <dbReference type="NCBI Taxonomy" id="71421"/>
    <lineage>
        <taxon>Bacteria</taxon>
        <taxon>Pseudomonadati</taxon>
        <taxon>Pseudomonadota</taxon>
        <taxon>Gammaproteobacteria</taxon>
        <taxon>Pasteurellales</taxon>
        <taxon>Pasteurellaceae</taxon>
        <taxon>Haemophilus</taxon>
    </lineage>
</organism>
<proteinExistence type="inferred from homology"/>
<accession>P43794</accession>
<feature type="chain" id="PRO_0000153238" description="Glutamine synthetase">
    <location>
        <begin position="1"/>
        <end position="472"/>
    </location>
</feature>
<feature type="domain" description="GS beta-grasp" evidence="6">
    <location>
        <begin position="17"/>
        <end position="101"/>
    </location>
</feature>
<feature type="domain" description="GS catalytic" evidence="7">
    <location>
        <begin position="109"/>
        <end position="472"/>
    </location>
</feature>
<feature type="binding site" evidence="4">
    <location>
        <position position="134"/>
    </location>
    <ligand>
        <name>Mg(2+)</name>
        <dbReference type="ChEBI" id="CHEBI:18420"/>
        <label>1</label>
    </ligand>
</feature>
<feature type="binding site" evidence="4">
    <location>
        <position position="136"/>
    </location>
    <ligand>
        <name>Mg(2+)</name>
        <dbReference type="ChEBI" id="CHEBI:18420"/>
        <label>2</label>
    </ligand>
</feature>
<feature type="binding site" evidence="1">
    <location>
        <position position="212"/>
    </location>
    <ligand>
        <name>ATP</name>
        <dbReference type="ChEBI" id="CHEBI:30616"/>
    </ligand>
</feature>
<feature type="binding site" evidence="4">
    <location>
        <position position="217"/>
    </location>
    <ligand>
        <name>Mg(2+)</name>
        <dbReference type="ChEBI" id="CHEBI:18420"/>
        <label>2</label>
    </ligand>
</feature>
<feature type="binding site" evidence="4">
    <location>
        <position position="225"/>
    </location>
    <ligand>
        <name>Mg(2+)</name>
        <dbReference type="ChEBI" id="CHEBI:18420"/>
        <label>2</label>
    </ligand>
</feature>
<feature type="binding site" evidence="1">
    <location>
        <begin position="269"/>
        <end position="270"/>
    </location>
    <ligand>
        <name>L-glutamate</name>
        <dbReference type="ChEBI" id="CHEBI:29985"/>
    </ligand>
</feature>
<feature type="binding site" evidence="2">
    <location>
        <position position="270"/>
    </location>
    <ligand>
        <name>L-glutamate</name>
        <dbReference type="ChEBI" id="CHEBI:29985"/>
    </ligand>
</feature>
<feature type="binding site" evidence="4">
    <location>
        <position position="274"/>
    </location>
    <ligand>
        <name>Mg(2+)</name>
        <dbReference type="ChEBI" id="CHEBI:18420"/>
        <label>1</label>
    </ligand>
</feature>
<feature type="binding site" evidence="1">
    <location>
        <begin position="276"/>
        <end position="278"/>
    </location>
    <ligand>
        <name>ATP</name>
        <dbReference type="ChEBI" id="CHEBI:30616"/>
    </ligand>
</feature>
<feature type="binding site" evidence="3">
    <location>
        <position position="278"/>
    </location>
    <ligand>
        <name>ATP</name>
        <dbReference type="ChEBI" id="CHEBI:30616"/>
    </ligand>
</feature>
<feature type="binding site" evidence="1">
    <location>
        <position position="326"/>
    </location>
    <ligand>
        <name>L-glutamate</name>
        <dbReference type="ChEBI" id="CHEBI:29985"/>
    </ligand>
</feature>
<feature type="binding site" evidence="1">
    <location>
        <position position="332"/>
    </location>
    <ligand>
        <name>L-glutamate</name>
        <dbReference type="ChEBI" id="CHEBI:29985"/>
    </ligand>
</feature>
<feature type="binding site" evidence="4">
    <location>
        <position position="344"/>
    </location>
    <ligand>
        <name>ATP</name>
        <dbReference type="ChEBI" id="CHEBI:30616"/>
    </ligand>
</feature>
<feature type="binding site" evidence="4">
    <location>
        <position position="344"/>
    </location>
    <ligand>
        <name>L-glutamate</name>
        <dbReference type="ChEBI" id="CHEBI:29985"/>
    </ligand>
</feature>
<feature type="binding site" evidence="4">
    <location>
        <position position="349"/>
    </location>
    <ligand>
        <name>ATP</name>
        <dbReference type="ChEBI" id="CHEBI:30616"/>
    </ligand>
</feature>
<feature type="binding site" evidence="3">
    <location>
        <position position="357"/>
    </location>
    <ligand>
        <name>ATP</name>
        <dbReference type="ChEBI" id="CHEBI:30616"/>
    </ligand>
</feature>
<feature type="binding site" evidence="4">
    <location>
        <position position="362"/>
    </location>
    <ligand>
        <name>Mg(2+)</name>
        <dbReference type="ChEBI" id="CHEBI:18420"/>
        <label>1</label>
    </ligand>
</feature>
<feature type="binding site" evidence="1">
    <location>
        <position position="364"/>
    </location>
    <ligand>
        <name>L-glutamate</name>
        <dbReference type="ChEBI" id="CHEBI:29985"/>
    </ligand>
</feature>
<feature type="modified residue" description="O-AMP-tyrosine" evidence="4">
    <location>
        <position position="402"/>
    </location>
</feature>
<dbReference type="EC" id="6.3.1.2" evidence="1"/>
<dbReference type="EMBL" id="L42023">
    <property type="protein sequence ID" value="AAC22524.1"/>
    <property type="molecule type" value="Genomic_DNA"/>
</dbReference>
<dbReference type="PIR" id="I64098">
    <property type="entry name" value="I64098"/>
</dbReference>
<dbReference type="RefSeq" id="NP_439025.1">
    <property type="nucleotide sequence ID" value="NC_000907.1"/>
</dbReference>
<dbReference type="SMR" id="P43794"/>
<dbReference type="STRING" id="71421.HI_0865"/>
<dbReference type="EnsemblBacteria" id="AAC22524">
    <property type="protein sequence ID" value="AAC22524"/>
    <property type="gene ID" value="HI_0865"/>
</dbReference>
<dbReference type="KEGG" id="hin:HI_0865"/>
<dbReference type="PATRIC" id="fig|71421.8.peg.906"/>
<dbReference type="eggNOG" id="COG0174">
    <property type="taxonomic scope" value="Bacteria"/>
</dbReference>
<dbReference type="HOGENOM" id="CLU_017290_1_2_6"/>
<dbReference type="OrthoDB" id="9807095at2"/>
<dbReference type="PhylomeDB" id="P43794"/>
<dbReference type="BioCyc" id="HINF71421:G1GJ1-906-MONOMER"/>
<dbReference type="Proteomes" id="UP000000579">
    <property type="component" value="Chromosome"/>
</dbReference>
<dbReference type="GO" id="GO:0005737">
    <property type="term" value="C:cytoplasm"/>
    <property type="evidence" value="ECO:0000318"/>
    <property type="project" value="GO_Central"/>
</dbReference>
<dbReference type="GO" id="GO:0016020">
    <property type="term" value="C:membrane"/>
    <property type="evidence" value="ECO:0000318"/>
    <property type="project" value="GO_Central"/>
</dbReference>
<dbReference type="GO" id="GO:0005524">
    <property type="term" value="F:ATP binding"/>
    <property type="evidence" value="ECO:0007669"/>
    <property type="project" value="UniProtKB-KW"/>
</dbReference>
<dbReference type="GO" id="GO:0004356">
    <property type="term" value="F:glutamine synthetase activity"/>
    <property type="evidence" value="ECO:0000318"/>
    <property type="project" value="GO_Central"/>
</dbReference>
<dbReference type="GO" id="GO:0046872">
    <property type="term" value="F:metal ion binding"/>
    <property type="evidence" value="ECO:0007669"/>
    <property type="project" value="UniProtKB-KW"/>
</dbReference>
<dbReference type="GO" id="GO:0006542">
    <property type="term" value="P:glutamine biosynthetic process"/>
    <property type="evidence" value="ECO:0000318"/>
    <property type="project" value="GO_Central"/>
</dbReference>
<dbReference type="GO" id="GO:0019740">
    <property type="term" value="P:nitrogen utilization"/>
    <property type="evidence" value="ECO:0000318"/>
    <property type="project" value="GO_Central"/>
</dbReference>
<dbReference type="FunFam" id="3.10.20.70:FF:000001">
    <property type="entry name" value="Glutamine synthetase"/>
    <property type="match status" value="1"/>
</dbReference>
<dbReference type="FunFam" id="3.30.590.10:FF:000001">
    <property type="entry name" value="Glutamine synthetase"/>
    <property type="match status" value="1"/>
</dbReference>
<dbReference type="Gene3D" id="3.10.20.70">
    <property type="entry name" value="Glutamine synthetase, N-terminal domain"/>
    <property type="match status" value="1"/>
</dbReference>
<dbReference type="Gene3D" id="3.30.590.10">
    <property type="entry name" value="Glutamine synthetase/guanido kinase, catalytic domain"/>
    <property type="match status" value="1"/>
</dbReference>
<dbReference type="InterPro" id="IPR008147">
    <property type="entry name" value="Gln_synt_N"/>
</dbReference>
<dbReference type="InterPro" id="IPR036651">
    <property type="entry name" value="Gln_synt_N_sf"/>
</dbReference>
<dbReference type="InterPro" id="IPR014746">
    <property type="entry name" value="Gln_synth/guanido_kin_cat_dom"/>
</dbReference>
<dbReference type="InterPro" id="IPR008146">
    <property type="entry name" value="Gln_synth_cat_dom"/>
</dbReference>
<dbReference type="InterPro" id="IPR027303">
    <property type="entry name" value="Gln_synth_gly_rich_site"/>
</dbReference>
<dbReference type="InterPro" id="IPR004809">
    <property type="entry name" value="Gln_synth_I"/>
</dbReference>
<dbReference type="InterPro" id="IPR001637">
    <property type="entry name" value="Gln_synth_I_adenylation_site"/>
</dbReference>
<dbReference type="InterPro" id="IPR027302">
    <property type="entry name" value="Gln_synth_N_conserv_site"/>
</dbReference>
<dbReference type="NCBIfam" id="TIGR00653">
    <property type="entry name" value="GlnA"/>
    <property type="match status" value="1"/>
</dbReference>
<dbReference type="NCBIfam" id="NF007006">
    <property type="entry name" value="PRK09469.1"/>
    <property type="match status" value="1"/>
</dbReference>
<dbReference type="PANTHER" id="PTHR43407">
    <property type="entry name" value="GLUTAMINE SYNTHETASE"/>
    <property type="match status" value="1"/>
</dbReference>
<dbReference type="PANTHER" id="PTHR43407:SF2">
    <property type="entry name" value="GLUTAMINE SYNTHETASE"/>
    <property type="match status" value="1"/>
</dbReference>
<dbReference type="Pfam" id="PF00120">
    <property type="entry name" value="Gln-synt_C"/>
    <property type="match status" value="1"/>
</dbReference>
<dbReference type="Pfam" id="PF03951">
    <property type="entry name" value="Gln-synt_N"/>
    <property type="match status" value="1"/>
</dbReference>
<dbReference type="SMART" id="SM01230">
    <property type="entry name" value="Gln-synt_C"/>
    <property type="match status" value="1"/>
</dbReference>
<dbReference type="SUPFAM" id="SSF54368">
    <property type="entry name" value="Glutamine synthetase, N-terminal domain"/>
    <property type="match status" value="1"/>
</dbReference>
<dbReference type="SUPFAM" id="SSF55931">
    <property type="entry name" value="Glutamine synthetase/guanido kinase"/>
    <property type="match status" value="1"/>
</dbReference>
<dbReference type="PROSITE" id="PS00180">
    <property type="entry name" value="GLNA_1"/>
    <property type="match status" value="1"/>
</dbReference>
<dbReference type="PROSITE" id="PS00182">
    <property type="entry name" value="GLNA_ADENYLATION"/>
    <property type="match status" value="1"/>
</dbReference>
<dbReference type="PROSITE" id="PS00181">
    <property type="entry name" value="GLNA_ATP"/>
    <property type="match status" value="1"/>
</dbReference>
<dbReference type="PROSITE" id="PS51986">
    <property type="entry name" value="GS_BETA_GRASP"/>
    <property type="match status" value="1"/>
</dbReference>
<dbReference type="PROSITE" id="PS51987">
    <property type="entry name" value="GS_CATALYTIC"/>
    <property type="match status" value="1"/>
</dbReference>
<gene>
    <name evidence="1" type="primary">glnA</name>
    <name type="ordered locus">HI_0865</name>
</gene>
<comment type="function">
    <text evidence="1">Catalyzes the ATP-dependent biosynthesis of glutamine from glutamate and ammonia.</text>
</comment>
<comment type="catalytic activity">
    <reaction evidence="1">
        <text>L-glutamate + NH4(+) + ATP = L-glutamine + ADP + phosphate + H(+)</text>
        <dbReference type="Rhea" id="RHEA:16169"/>
        <dbReference type="ChEBI" id="CHEBI:15378"/>
        <dbReference type="ChEBI" id="CHEBI:28938"/>
        <dbReference type="ChEBI" id="CHEBI:29985"/>
        <dbReference type="ChEBI" id="CHEBI:30616"/>
        <dbReference type="ChEBI" id="CHEBI:43474"/>
        <dbReference type="ChEBI" id="CHEBI:58359"/>
        <dbReference type="ChEBI" id="CHEBI:456216"/>
        <dbReference type="EC" id="6.3.1.2"/>
    </reaction>
</comment>
<comment type="cofactor">
    <cofactor evidence="4">
        <name>Mg(2+)</name>
        <dbReference type="ChEBI" id="CHEBI:18420"/>
    </cofactor>
    <text evidence="4">Binds 2 Mg(2+) ions per subunit.</text>
</comment>
<comment type="activity regulation">
    <text evidence="5">The activity of this enzyme could be controlled by adenylation under conditions of abundant glutamine.</text>
</comment>
<comment type="subunit">
    <text evidence="1">Oligomer of 12 subunits arranged in the form of two hexameric ring.</text>
</comment>
<comment type="subcellular location">
    <subcellularLocation>
        <location evidence="4">Cytoplasm</location>
    </subcellularLocation>
</comment>
<comment type="similarity">
    <text evidence="8">Belongs to the glutamine synthetase family.</text>
</comment>
<name>GLN1B_HAEIN</name>
<reference key="1">
    <citation type="journal article" date="1995" name="Science">
        <title>Whole-genome random sequencing and assembly of Haemophilus influenzae Rd.</title>
        <authorList>
            <person name="Fleischmann R.D."/>
            <person name="Adams M.D."/>
            <person name="White O."/>
            <person name="Clayton R.A."/>
            <person name="Kirkness E.F."/>
            <person name="Kerlavage A.R."/>
            <person name="Bult C.J."/>
            <person name="Tomb J.-F."/>
            <person name="Dougherty B.A."/>
            <person name="Merrick J.M."/>
            <person name="McKenney K."/>
            <person name="Sutton G.G."/>
            <person name="FitzHugh W."/>
            <person name="Fields C.A."/>
            <person name="Gocayne J.D."/>
            <person name="Scott J.D."/>
            <person name="Shirley R."/>
            <person name="Liu L.-I."/>
            <person name="Glodek A."/>
            <person name="Kelley J.M."/>
            <person name="Weidman J.F."/>
            <person name="Phillips C.A."/>
            <person name="Spriggs T."/>
            <person name="Hedblom E."/>
            <person name="Cotton M.D."/>
            <person name="Utterback T.R."/>
            <person name="Hanna M.C."/>
            <person name="Nguyen D.T."/>
            <person name="Saudek D.M."/>
            <person name="Brandon R.C."/>
            <person name="Fine L.D."/>
            <person name="Fritchman J.L."/>
            <person name="Fuhrmann J.L."/>
            <person name="Geoghagen N.S.M."/>
            <person name="Gnehm C.L."/>
            <person name="McDonald L.A."/>
            <person name="Small K.V."/>
            <person name="Fraser C.M."/>
            <person name="Smith H.O."/>
            <person name="Venter J.C."/>
        </authorList>
    </citation>
    <scope>NUCLEOTIDE SEQUENCE [LARGE SCALE GENOMIC DNA]</scope>
    <source>
        <strain>ATCC 51907 / DSM 11121 / KW20 / Rd</strain>
    </source>
</reference>
<evidence type="ECO:0000250" key="1">
    <source>
        <dbReference type="UniProtKB" id="P0A1P6"/>
    </source>
</evidence>
<evidence type="ECO:0000250" key="2">
    <source>
        <dbReference type="UniProtKB" id="P12425"/>
    </source>
</evidence>
<evidence type="ECO:0000250" key="3">
    <source>
        <dbReference type="UniProtKB" id="P77961"/>
    </source>
</evidence>
<evidence type="ECO:0000250" key="4">
    <source>
        <dbReference type="UniProtKB" id="P9WN39"/>
    </source>
</evidence>
<evidence type="ECO:0000250" key="5">
    <source>
        <dbReference type="UniProtKB" id="Q3V5W6"/>
    </source>
</evidence>
<evidence type="ECO:0000255" key="6">
    <source>
        <dbReference type="PROSITE-ProRule" id="PRU01330"/>
    </source>
</evidence>
<evidence type="ECO:0000255" key="7">
    <source>
        <dbReference type="PROSITE-ProRule" id="PRU01331"/>
    </source>
</evidence>
<evidence type="ECO:0000305" key="8"/>